<organism>
    <name type="scientific">Parafrankia sp. (strain EAN1pec)</name>
    <dbReference type="NCBI Taxonomy" id="298653"/>
    <lineage>
        <taxon>Bacteria</taxon>
        <taxon>Bacillati</taxon>
        <taxon>Actinomycetota</taxon>
        <taxon>Actinomycetes</taxon>
        <taxon>Frankiales</taxon>
        <taxon>Frankiaceae</taxon>
        <taxon>Parafrankia</taxon>
    </lineage>
</organism>
<proteinExistence type="inferred from homology"/>
<evidence type="ECO:0000255" key="1">
    <source>
        <dbReference type="HAMAP-Rule" id="MF_02113"/>
    </source>
</evidence>
<name>PSB_PARS2</name>
<comment type="function">
    <text evidence="1">Component of the proteasome core, a large protease complex with broad specificity involved in protein degradation.</text>
</comment>
<comment type="catalytic activity">
    <reaction evidence="1">
        <text>Cleavage of peptide bonds with very broad specificity.</text>
        <dbReference type="EC" id="3.4.25.1"/>
    </reaction>
</comment>
<comment type="activity regulation">
    <text evidence="1">The formation of the proteasomal ATPase ARC-20S proteasome complex, likely via the docking of the C-termini of ARC into the intersubunit pockets in the alpha-rings, may trigger opening of the gate for substrate entry. Interconversion between the open-gate and close-gate conformations leads to a dynamic regulation of the 20S proteasome proteolysis activity.</text>
</comment>
<comment type="pathway">
    <text evidence="1">Protein degradation; proteasomal Pup-dependent pathway.</text>
</comment>
<comment type="subunit">
    <text evidence="1">The 20S proteasome core is composed of 14 alpha and 14 beta subunits that assemble into four stacked heptameric rings, resulting in a barrel-shaped structure. The two inner rings, each composed of seven catalytic beta subunits, are sandwiched by two outer rings, each composed of seven alpha subunits. The catalytic chamber with the active sites is on the inside of the barrel. Has a gated structure, the ends of the cylinder being occluded by the N-termini of the alpha-subunits. Is capped by the proteasome-associated ATPase, ARC.</text>
</comment>
<comment type="subcellular location">
    <subcellularLocation>
        <location evidence="1">Cytoplasm</location>
    </subcellularLocation>
</comment>
<comment type="similarity">
    <text evidence="1">Belongs to the peptidase T1B family.</text>
</comment>
<reference key="1">
    <citation type="journal article" date="2007" name="Genome Res.">
        <title>Genome characteristics of facultatively symbiotic Frankia sp. strains reflect host range and host plant biogeography.</title>
        <authorList>
            <person name="Normand P."/>
            <person name="Lapierre P."/>
            <person name="Tisa L.S."/>
            <person name="Gogarten J.P."/>
            <person name="Alloisio N."/>
            <person name="Bagnarol E."/>
            <person name="Bassi C.A."/>
            <person name="Berry A.M."/>
            <person name="Bickhart D.M."/>
            <person name="Choisne N."/>
            <person name="Couloux A."/>
            <person name="Cournoyer B."/>
            <person name="Cruveiller S."/>
            <person name="Daubin V."/>
            <person name="Demange N."/>
            <person name="Francino M.P."/>
            <person name="Goltsman E."/>
            <person name="Huang Y."/>
            <person name="Kopp O.R."/>
            <person name="Labarre L."/>
            <person name="Lapidus A."/>
            <person name="Lavire C."/>
            <person name="Marechal J."/>
            <person name="Martinez M."/>
            <person name="Mastronunzio J.E."/>
            <person name="Mullin B.C."/>
            <person name="Niemann J."/>
            <person name="Pujic P."/>
            <person name="Rawnsley T."/>
            <person name="Rouy Z."/>
            <person name="Schenowitz C."/>
            <person name="Sellstedt A."/>
            <person name="Tavares F."/>
            <person name="Tomkins J.P."/>
            <person name="Vallenet D."/>
            <person name="Valverde C."/>
            <person name="Wall L.G."/>
            <person name="Wang Y."/>
            <person name="Medigue C."/>
            <person name="Benson D.R."/>
        </authorList>
    </citation>
    <scope>NUCLEOTIDE SEQUENCE [LARGE SCALE GENOMIC DNA]</scope>
    <source>
        <strain>EAN1pec</strain>
    </source>
</reference>
<accession>A8LH54</accession>
<keyword id="KW-0068">Autocatalytic cleavage</keyword>
<keyword id="KW-0963">Cytoplasm</keyword>
<keyword id="KW-0378">Hydrolase</keyword>
<keyword id="KW-0645">Protease</keyword>
<keyword id="KW-0647">Proteasome</keyword>
<keyword id="KW-0888">Threonine protease</keyword>
<keyword id="KW-0865">Zymogen</keyword>
<feature type="propeptide" id="PRO_0000397508" description="Removed in mature form; by autocatalysis" evidence="1">
    <location>
        <begin position="1"/>
        <end position="52"/>
    </location>
</feature>
<feature type="chain" id="PRO_0000397509" description="Proteasome subunit beta">
    <location>
        <begin position="53"/>
        <end position="274"/>
    </location>
</feature>
<feature type="active site" description="Nucleophile" evidence="1">
    <location>
        <position position="53"/>
    </location>
</feature>
<gene>
    <name evidence="1" type="primary">prcB</name>
    <name type="ordered locus">Franean1_4879</name>
</gene>
<sequence length="274" mass="28875">MPDPTGVAGRLPAVFMTPGTSSFTDFLSVAAPDLLPGARGPLPAPVTDAAHGTTIVAVAFPGGVIMAGDRRATQGHMIAQRDVEKVHHADEFSCVGYAGTAGVGAELIRLFQVELEHYEKIEGSTLSLDAKANRLAFMVKGNLGMAMQGLAVIPLFAGFDTETGEGRIFSYDIAAAKSEERTYESIGSGSVFARGSLKKRYRANHSQDDAIRISVEALYDAADDDSATGGPDLIRKLYPIVASVTVDGYRRLTDDEVGPVVDSIIADRAQNSGG</sequence>
<protein>
    <recommendedName>
        <fullName evidence="1">Proteasome subunit beta</fullName>
        <ecNumber evidence="1">3.4.25.1</ecNumber>
    </recommendedName>
    <alternativeName>
        <fullName evidence="1">20S proteasome beta subunit</fullName>
    </alternativeName>
    <alternativeName>
        <fullName evidence="1">Proteasome core protein PrcB</fullName>
    </alternativeName>
</protein>
<dbReference type="EC" id="3.4.25.1" evidence="1"/>
<dbReference type="EMBL" id="CP000820">
    <property type="protein sequence ID" value="ABW14244.1"/>
    <property type="molecule type" value="Genomic_DNA"/>
</dbReference>
<dbReference type="RefSeq" id="WP_020462363.1">
    <property type="nucleotide sequence ID" value="NC_009921.1"/>
</dbReference>
<dbReference type="SMR" id="A8LH54"/>
<dbReference type="STRING" id="298653.Franean1_4879"/>
<dbReference type="MEROPS" id="T01.005"/>
<dbReference type="KEGG" id="fre:Franean1_4879"/>
<dbReference type="eggNOG" id="COG0638">
    <property type="taxonomic scope" value="Bacteria"/>
</dbReference>
<dbReference type="HOGENOM" id="CLU_035750_2_0_11"/>
<dbReference type="UniPathway" id="UPA00997"/>
<dbReference type="GO" id="GO:0005737">
    <property type="term" value="C:cytoplasm"/>
    <property type="evidence" value="ECO:0007669"/>
    <property type="project" value="UniProtKB-SubCell"/>
</dbReference>
<dbReference type="GO" id="GO:0019774">
    <property type="term" value="C:proteasome core complex, beta-subunit complex"/>
    <property type="evidence" value="ECO:0007669"/>
    <property type="project" value="UniProtKB-UniRule"/>
</dbReference>
<dbReference type="GO" id="GO:0004298">
    <property type="term" value="F:threonine-type endopeptidase activity"/>
    <property type="evidence" value="ECO:0007669"/>
    <property type="project" value="UniProtKB-UniRule"/>
</dbReference>
<dbReference type="GO" id="GO:0019941">
    <property type="term" value="P:modification-dependent protein catabolic process"/>
    <property type="evidence" value="ECO:0007669"/>
    <property type="project" value="UniProtKB-UniRule"/>
</dbReference>
<dbReference type="GO" id="GO:0010498">
    <property type="term" value="P:proteasomal protein catabolic process"/>
    <property type="evidence" value="ECO:0007669"/>
    <property type="project" value="UniProtKB-UniRule"/>
</dbReference>
<dbReference type="CDD" id="cd01906">
    <property type="entry name" value="proteasome_protease_HslV"/>
    <property type="match status" value="1"/>
</dbReference>
<dbReference type="Gene3D" id="3.60.20.10">
    <property type="entry name" value="Glutamine Phosphoribosylpyrophosphate, subunit 1, domain 1"/>
    <property type="match status" value="1"/>
</dbReference>
<dbReference type="HAMAP" id="MF_02113_B">
    <property type="entry name" value="Proteasome_B_B"/>
    <property type="match status" value="1"/>
</dbReference>
<dbReference type="InterPro" id="IPR029055">
    <property type="entry name" value="Ntn_hydrolases_N"/>
</dbReference>
<dbReference type="InterPro" id="IPR001353">
    <property type="entry name" value="Proteasome_sua/b"/>
</dbReference>
<dbReference type="InterPro" id="IPR023333">
    <property type="entry name" value="Proteasome_suB-type"/>
</dbReference>
<dbReference type="InterPro" id="IPR022483">
    <property type="entry name" value="PSB_actinobac"/>
</dbReference>
<dbReference type="NCBIfam" id="TIGR03690">
    <property type="entry name" value="20S_bact_beta"/>
    <property type="match status" value="1"/>
</dbReference>
<dbReference type="PANTHER" id="PTHR32194:SF0">
    <property type="entry name" value="ATP-DEPENDENT PROTEASE SUBUNIT HSLV"/>
    <property type="match status" value="1"/>
</dbReference>
<dbReference type="PANTHER" id="PTHR32194">
    <property type="entry name" value="METALLOPROTEASE TLDD"/>
    <property type="match status" value="1"/>
</dbReference>
<dbReference type="Pfam" id="PF00227">
    <property type="entry name" value="Proteasome"/>
    <property type="match status" value="1"/>
</dbReference>
<dbReference type="SUPFAM" id="SSF56235">
    <property type="entry name" value="N-terminal nucleophile aminohydrolases (Ntn hydrolases)"/>
    <property type="match status" value="1"/>
</dbReference>
<dbReference type="PROSITE" id="PS51476">
    <property type="entry name" value="PROTEASOME_BETA_2"/>
    <property type="match status" value="1"/>
</dbReference>